<feature type="chain" id="PRO_0000308957" description="KH domain-containing, RNA-binding, signal transduction-associated protein 2">
    <location>
        <begin position="1"/>
        <end position="345"/>
    </location>
</feature>
<feature type="domain" description="KH" evidence="2">
    <location>
        <begin position="65"/>
        <end position="131"/>
    </location>
</feature>
<feature type="region of interest" description="Disordered" evidence="3">
    <location>
        <begin position="178"/>
        <end position="224"/>
    </location>
</feature>
<feature type="region of interest" description="Disordered" evidence="3">
    <location>
        <begin position="321"/>
        <end position="345"/>
    </location>
</feature>
<feature type="compositionally biased region" description="Basic and acidic residues" evidence="3">
    <location>
        <begin position="336"/>
        <end position="345"/>
    </location>
</feature>
<name>KHDR2_XENTR</name>
<proteinExistence type="evidence at transcript level"/>
<protein>
    <recommendedName>
        <fullName>KH domain-containing, RNA-binding, signal transduction-associated protein 2</fullName>
    </recommendedName>
</protein>
<sequence length="345" mass="39273">MEEEKYLPELMAEKDSLDPSFVHAMRLLDEEIVKFQDSEGNKEDGEKKYLDIISNKNIKLSERVLIPVKQYPKFNFVGKLLGPRGNSLKRLQEETGAKMSILGKGSMRDKIKEEELRKSDEAKHAHLSDELHVLLEVFAPPGEAYSRMSHALEEIKKFLVPDYNDEIRQEQLRELSYLNGSDDSERGKGTRGRGIRVPSTPSRNRGGVISPAFPGRGASATRGAPITRGTISTVARGIPTPRAKAAPTTPGYRLPPPLTIETYDDYGYDDGFGEDYDEQSYDIYENNYNSQTQSVSEYYDYEHGTNEESYNHYEQEEWSKSRSTLKAPLQRPARAGYREHPYGRY</sequence>
<evidence type="ECO:0000250" key="1">
    <source>
        <dbReference type="UniProtKB" id="Q9WU01"/>
    </source>
</evidence>
<evidence type="ECO:0000255" key="2">
    <source>
        <dbReference type="PROSITE-ProRule" id="PRU00117"/>
    </source>
</evidence>
<evidence type="ECO:0000256" key="3">
    <source>
        <dbReference type="SAM" id="MobiDB-lite"/>
    </source>
</evidence>
<evidence type="ECO:0000305" key="4"/>
<keyword id="KW-0507">mRNA processing</keyword>
<keyword id="KW-0539">Nucleus</keyword>
<keyword id="KW-1185">Reference proteome</keyword>
<keyword id="KW-0694">RNA-binding</keyword>
<keyword id="KW-0804">Transcription</keyword>
<keyword id="KW-0805">Transcription regulation</keyword>
<gene>
    <name type="primary">khdrbs2</name>
</gene>
<accession>Q0VFL3</accession>
<comment type="function">
    <text evidence="1">RNA-binding protein that plays a role in the regulation of alternative splicing.</text>
</comment>
<comment type="subcellular location">
    <subcellularLocation>
        <location evidence="1">Nucleus</location>
    </subcellularLocation>
</comment>
<comment type="similarity">
    <text evidence="4">Belongs to the KHDRBS family.</text>
</comment>
<organism>
    <name type="scientific">Xenopus tropicalis</name>
    <name type="common">Western clawed frog</name>
    <name type="synonym">Silurana tropicalis</name>
    <dbReference type="NCBI Taxonomy" id="8364"/>
    <lineage>
        <taxon>Eukaryota</taxon>
        <taxon>Metazoa</taxon>
        <taxon>Chordata</taxon>
        <taxon>Craniata</taxon>
        <taxon>Vertebrata</taxon>
        <taxon>Euteleostomi</taxon>
        <taxon>Amphibia</taxon>
        <taxon>Batrachia</taxon>
        <taxon>Anura</taxon>
        <taxon>Pipoidea</taxon>
        <taxon>Pipidae</taxon>
        <taxon>Xenopodinae</taxon>
        <taxon>Xenopus</taxon>
        <taxon>Silurana</taxon>
    </lineage>
</organism>
<reference key="1">
    <citation type="submission" date="2006-07" db="EMBL/GenBank/DDBJ databases">
        <authorList>
            <consortium name="NIH - Xenopus Gene Collection (XGC) project"/>
        </authorList>
    </citation>
    <scope>NUCLEOTIDE SEQUENCE [LARGE SCALE MRNA]</scope>
    <source>
        <tissue>Brain</tissue>
    </source>
</reference>
<dbReference type="EMBL" id="BC118787">
    <property type="protein sequence ID" value="AAI18788.1"/>
    <property type="molecule type" value="mRNA"/>
</dbReference>
<dbReference type="RefSeq" id="NP_001072215.1">
    <property type="nucleotide sequence ID" value="NM_001078747.1"/>
</dbReference>
<dbReference type="SMR" id="Q0VFL3"/>
<dbReference type="FunCoup" id="Q0VFL3">
    <property type="interactions" value="1951"/>
</dbReference>
<dbReference type="STRING" id="8364.ENSXETP00000002264"/>
<dbReference type="PaxDb" id="8364-ENSXETP00000009677"/>
<dbReference type="DNASU" id="779662"/>
<dbReference type="GeneID" id="779662"/>
<dbReference type="KEGG" id="xtr:779662"/>
<dbReference type="AGR" id="Xenbase:XB-GENE-490722"/>
<dbReference type="CTD" id="202559"/>
<dbReference type="Xenbase" id="XB-GENE-490722">
    <property type="gene designation" value="khdrbs2"/>
</dbReference>
<dbReference type="eggNOG" id="KOG1588">
    <property type="taxonomic scope" value="Eukaryota"/>
</dbReference>
<dbReference type="HOGENOM" id="CLU_034976_0_0_1"/>
<dbReference type="InParanoid" id="Q0VFL3"/>
<dbReference type="OMA" id="YGHGVNE"/>
<dbReference type="OrthoDB" id="6777263at2759"/>
<dbReference type="PhylomeDB" id="Q0VFL3"/>
<dbReference type="TreeFam" id="TF314878"/>
<dbReference type="Reactome" id="R-XTR-8849468">
    <property type="pathway name" value="PTK6 Regulates Proteins Involved in RNA Processing"/>
</dbReference>
<dbReference type="Proteomes" id="UP000008143">
    <property type="component" value="Chromosome 5"/>
</dbReference>
<dbReference type="Bgee" id="ENSXETG00000004451">
    <property type="expression patterns" value="Expressed in brain and 4 other cell types or tissues"/>
</dbReference>
<dbReference type="GO" id="GO:0005634">
    <property type="term" value="C:nucleus"/>
    <property type="evidence" value="ECO:0007669"/>
    <property type="project" value="UniProtKB-SubCell"/>
</dbReference>
<dbReference type="GO" id="GO:0003723">
    <property type="term" value="F:RNA binding"/>
    <property type="evidence" value="ECO:0007669"/>
    <property type="project" value="UniProtKB-KW"/>
</dbReference>
<dbReference type="GO" id="GO:0006397">
    <property type="term" value="P:mRNA processing"/>
    <property type="evidence" value="ECO:0007669"/>
    <property type="project" value="UniProtKB-KW"/>
</dbReference>
<dbReference type="CDD" id="cd22469">
    <property type="entry name" value="KH-I_KHDRBS2"/>
    <property type="match status" value="1"/>
</dbReference>
<dbReference type="FunFam" id="3.30.1370.10:FF:000030">
    <property type="entry name" value="KH domain-containing, RNA-binding, signal transduction-associated protein 3 isoformX2"/>
    <property type="match status" value="1"/>
</dbReference>
<dbReference type="Gene3D" id="3.30.1370.10">
    <property type="entry name" value="K Homology domain, type 1"/>
    <property type="match status" value="1"/>
</dbReference>
<dbReference type="InterPro" id="IPR045071">
    <property type="entry name" value="BBP-like"/>
</dbReference>
<dbReference type="InterPro" id="IPR055256">
    <property type="entry name" value="KH_1_KHDC4/BBP-like"/>
</dbReference>
<dbReference type="InterPro" id="IPR004087">
    <property type="entry name" value="KH_dom"/>
</dbReference>
<dbReference type="InterPro" id="IPR036612">
    <property type="entry name" value="KH_dom_type_1_sf"/>
</dbReference>
<dbReference type="InterPro" id="IPR032571">
    <property type="entry name" value="Qua1_dom"/>
</dbReference>
<dbReference type="InterPro" id="IPR032335">
    <property type="entry name" value="Sam68-YY"/>
</dbReference>
<dbReference type="PANTHER" id="PTHR11208:SF34">
    <property type="entry name" value="KH DOMAIN-CONTAINING, RNA-BINDING, SIGNAL TRANSDUCTION-ASSOCIATED PROTEIN 2"/>
    <property type="match status" value="1"/>
</dbReference>
<dbReference type="PANTHER" id="PTHR11208">
    <property type="entry name" value="RNA-BINDING PROTEIN RELATED"/>
    <property type="match status" value="1"/>
</dbReference>
<dbReference type="Pfam" id="PF22675">
    <property type="entry name" value="KH-I_KHDC4-BBP"/>
    <property type="match status" value="1"/>
</dbReference>
<dbReference type="Pfam" id="PF16274">
    <property type="entry name" value="Qua1"/>
    <property type="match status" value="1"/>
</dbReference>
<dbReference type="Pfam" id="PF16568">
    <property type="entry name" value="Sam68-YY"/>
    <property type="match status" value="1"/>
</dbReference>
<dbReference type="SMART" id="SM00322">
    <property type="entry name" value="KH"/>
    <property type="match status" value="1"/>
</dbReference>
<dbReference type="SUPFAM" id="SSF54791">
    <property type="entry name" value="Eukaryotic type KH-domain (KH-domain type I)"/>
    <property type="match status" value="1"/>
</dbReference>
<dbReference type="PROSITE" id="PS50084">
    <property type="entry name" value="KH_TYPE_1"/>
    <property type="match status" value="1"/>
</dbReference>